<accession>Q3BSV4</accession>
<organism>
    <name type="scientific">Xanthomonas euvesicatoria pv. vesicatoria (strain 85-10)</name>
    <name type="common">Xanthomonas campestris pv. vesicatoria</name>
    <dbReference type="NCBI Taxonomy" id="316273"/>
    <lineage>
        <taxon>Bacteria</taxon>
        <taxon>Pseudomonadati</taxon>
        <taxon>Pseudomonadota</taxon>
        <taxon>Gammaproteobacteria</taxon>
        <taxon>Lysobacterales</taxon>
        <taxon>Lysobacteraceae</taxon>
        <taxon>Xanthomonas</taxon>
    </lineage>
</organism>
<comment type="catalytic activity">
    <reaction evidence="1">
        <text>(4aS,6R)-4a-hydroxy-L-erythro-5,6,7,8-tetrahydrobiopterin = (6R)-L-erythro-6,7-dihydrobiopterin + H2O</text>
        <dbReference type="Rhea" id="RHEA:11920"/>
        <dbReference type="ChEBI" id="CHEBI:15377"/>
        <dbReference type="ChEBI" id="CHEBI:15642"/>
        <dbReference type="ChEBI" id="CHEBI:43120"/>
        <dbReference type="EC" id="4.2.1.96"/>
    </reaction>
</comment>
<comment type="similarity">
    <text evidence="1">Belongs to the pterin-4-alpha-carbinolamine dehydratase family.</text>
</comment>
<evidence type="ECO:0000255" key="1">
    <source>
        <dbReference type="HAMAP-Rule" id="MF_00434"/>
    </source>
</evidence>
<name>PHS_XANE5</name>
<proteinExistence type="inferred from homology"/>
<feature type="chain" id="PRO_0000231478" description="Putative pterin-4-alpha-carbinolamine dehydratase">
    <location>
        <begin position="1"/>
        <end position="118"/>
    </location>
</feature>
<gene>
    <name type="ordered locus">XCV2428</name>
</gene>
<reference key="1">
    <citation type="journal article" date="2005" name="J. Bacteriol.">
        <title>Insights into genome plasticity and pathogenicity of the plant pathogenic Bacterium Xanthomonas campestris pv. vesicatoria revealed by the complete genome sequence.</title>
        <authorList>
            <person name="Thieme F."/>
            <person name="Koebnik R."/>
            <person name="Bekel T."/>
            <person name="Berger C."/>
            <person name="Boch J."/>
            <person name="Buettner D."/>
            <person name="Caldana C."/>
            <person name="Gaigalat L."/>
            <person name="Goesmann A."/>
            <person name="Kay S."/>
            <person name="Kirchner O."/>
            <person name="Lanz C."/>
            <person name="Linke B."/>
            <person name="McHardy A.C."/>
            <person name="Meyer F."/>
            <person name="Mittenhuber G."/>
            <person name="Nies D.H."/>
            <person name="Niesbach-Kloesgen U."/>
            <person name="Patschkowski T."/>
            <person name="Rueckert C."/>
            <person name="Rupp O."/>
            <person name="Schneiker S."/>
            <person name="Schuster S.C."/>
            <person name="Vorhoelter F.J."/>
            <person name="Weber E."/>
            <person name="Puehler A."/>
            <person name="Bonas U."/>
            <person name="Bartels D."/>
            <person name="Kaiser O."/>
        </authorList>
    </citation>
    <scope>NUCLEOTIDE SEQUENCE [LARGE SCALE GENOMIC DNA]</scope>
    <source>
        <strain>85-10</strain>
    </source>
</reference>
<dbReference type="EC" id="4.2.1.96" evidence="1"/>
<dbReference type="EMBL" id="AM039952">
    <property type="protein sequence ID" value="CAJ24105.1"/>
    <property type="molecule type" value="Genomic_DNA"/>
</dbReference>
<dbReference type="RefSeq" id="WP_011347610.1">
    <property type="nucleotide sequence ID" value="NZ_CP017190.1"/>
</dbReference>
<dbReference type="SMR" id="Q3BSV4"/>
<dbReference type="STRING" id="456327.BJD11_10810"/>
<dbReference type="KEGG" id="xcv:XCV2428"/>
<dbReference type="eggNOG" id="COG2154">
    <property type="taxonomic scope" value="Bacteria"/>
</dbReference>
<dbReference type="HOGENOM" id="CLU_081974_2_1_6"/>
<dbReference type="Proteomes" id="UP000007069">
    <property type="component" value="Chromosome"/>
</dbReference>
<dbReference type="GO" id="GO:0008124">
    <property type="term" value="F:4-alpha-hydroxytetrahydrobiopterin dehydratase activity"/>
    <property type="evidence" value="ECO:0007669"/>
    <property type="project" value="UniProtKB-UniRule"/>
</dbReference>
<dbReference type="GO" id="GO:0006729">
    <property type="term" value="P:tetrahydrobiopterin biosynthetic process"/>
    <property type="evidence" value="ECO:0007669"/>
    <property type="project" value="InterPro"/>
</dbReference>
<dbReference type="CDD" id="cd00913">
    <property type="entry name" value="PCD_DCoH_subfamily_a"/>
    <property type="match status" value="1"/>
</dbReference>
<dbReference type="Gene3D" id="3.30.1360.20">
    <property type="entry name" value="Transcriptional coactivator/pterin dehydratase"/>
    <property type="match status" value="1"/>
</dbReference>
<dbReference type="HAMAP" id="MF_00434">
    <property type="entry name" value="Pterin_4_alpha"/>
    <property type="match status" value="1"/>
</dbReference>
<dbReference type="InterPro" id="IPR036428">
    <property type="entry name" value="PCD_sf"/>
</dbReference>
<dbReference type="InterPro" id="IPR001533">
    <property type="entry name" value="Pterin_deHydtase"/>
</dbReference>
<dbReference type="NCBIfam" id="NF002019">
    <property type="entry name" value="PRK00823.1-4"/>
    <property type="match status" value="1"/>
</dbReference>
<dbReference type="PANTHER" id="PTHR12599">
    <property type="entry name" value="PTERIN-4-ALPHA-CARBINOLAMINE DEHYDRATASE"/>
    <property type="match status" value="1"/>
</dbReference>
<dbReference type="PANTHER" id="PTHR12599:SF0">
    <property type="entry name" value="PTERIN-4-ALPHA-CARBINOLAMINE DEHYDRATASE"/>
    <property type="match status" value="1"/>
</dbReference>
<dbReference type="Pfam" id="PF01329">
    <property type="entry name" value="Pterin_4a"/>
    <property type="match status" value="1"/>
</dbReference>
<dbReference type="SUPFAM" id="SSF55248">
    <property type="entry name" value="PCD-like"/>
    <property type="match status" value="1"/>
</dbReference>
<keyword id="KW-0456">Lyase</keyword>
<sequence>MTDLIPLEQAHCLPRKGSDHKLGEARLTELLPQVPGWELAEAGMALTRTFRFADYYRTLAFVNALAWIAHREDHHPDLGVHYDRVVVRYSTHDVGGLSENDFICAAKTAQLYDQGITA</sequence>
<protein>
    <recommendedName>
        <fullName evidence="1">Putative pterin-4-alpha-carbinolamine dehydratase</fullName>
        <shortName evidence="1">PHS</shortName>
        <ecNumber evidence="1">4.2.1.96</ecNumber>
    </recommendedName>
    <alternativeName>
        <fullName evidence="1">4-alpha-hydroxy-tetrahydropterin dehydratase</fullName>
    </alternativeName>
    <alternativeName>
        <fullName evidence="1">Pterin carbinolamine dehydratase</fullName>
        <shortName evidence="1">PCD</shortName>
    </alternativeName>
</protein>